<accession>B5VMG3</accession>
<dbReference type="EMBL" id="ABSV01001492">
    <property type="protein sequence ID" value="EDZ70881.1"/>
    <property type="molecule type" value="Genomic_DNA"/>
</dbReference>
<dbReference type="SMR" id="B5VMG3"/>
<dbReference type="OrthoDB" id="40979at4893"/>
<dbReference type="Proteomes" id="UP000008988">
    <property type="component" value="Unassembled WGS sequence"/>
</dbReference>
<dbReference type="GO" id="GO:0061617">
    <property type="term" value="C:MICOS complex"/>
    <property type="evidence" value="ECO:0007669"/>
    <property type="project" value="TreeGrafter"/>
</dbReference>
<dbReference type="GO" id="GO:0042407">
    <property type="term" value="P:cristae formation"/>
    <property type="evidence" value="ECO:0007669"/>
    <property type="project" value="TreeGrafter"/>
</dbReference>
<dbReference type="InterPro" id="IPR019133">
    <property type="entry name" value="MIC60"/>
</dbReference>
<dbReference type="PANTHER" id="PTHR15415:SF7">
    <property type="entry name" value="MICOS COMPLEX SUBUNIT MIC60"/>
    <property type="match status" value="1"/>
</dbReference>
<dbReference type="PANTHER" id="PTHR15415">
    <property type="entry name" value="MITOFILIN"/>
    <property type="match status" value="1"/>
</dbReference>
<dbReference type="Pfam" id="PF09731">
    <property type="entry name" value="Mitofilin"/>
    <property type="match status" value="3"/>
</dbReference>
<keyword id="KW-0175">Coiled coil</keyword>
<keyword id="KW-0472">Membrane</keyword>
<keyword id="KW-0496">Mitochondrion</keyword>
<keyword id="KW-0999">Mitochondrion inner membrane</keyword>
<keyword id="KW-0809">Transit peptide</keyword>
<keyword id="KW-0812">Transmembrane</keyword>
<keyword id="KW-1133">Transmembrane helix</keyword>
<proteinExistence type="inferred from homology"/>
<gene>
    <name type="primary">MIC60</name>
    <name type="ORF">AWRI1631_112380</name>
</gene>
<name>MIC60_YEAS6</name>
<comment type="function">
    <text evidence="1">Component of the MICOS complex, a large protein complex of the mitochondrial inner membrane that plays crucial roles in the maintenance of crista junctions, inner membrane architecture, and formation of contact sites to the outer membrane. Plays a role in keeping cristae membranes connected to the inner boundary membrane. Also promotes protein import via the mitochondrial intermembrane space assembly (MIA) pathway (By similarity).</text>
</comment>
<comment type="subunit">
    <text evidence="1">Component of the mitochondrial contact site and cristae organizing system (MICOS) complex.</text>
</comment>
<comment type="subcellular location">
    <subcellularLocation>
        <location evidence="1">Mitochondrion inner membrane</location>
        <topology evidence="1">Single-pass membrane protein</topology>
    </subcellularLocation>
</comment>
<comment type="similarity">
    <text evidence="3">Belongs to the MICOS complex subunit Mic60 family.</text>
</comment>
<feature type="transit peptide" description="Mitochondrion" evidence="2">
    <location>
        <begin position="1"/>
        <end position="16"/>
    </location>
</feature>
<feature type="chain" id="PRO_0000406681" description="MICOS complex subunit MIC60">
    <location>
        <begin position="17"/>
        <end position="539"/>
    </location>
</feature>
<feature type="topological domain" description="Mitochondrial matrix" evidence="2">
    <location>
        <begin position="17"/>
        <end position="36"/>
    </location>
</feature>
<feature type="transmembrane region" description="Helical" evidence="2">
    <location>
        <begin position="37"/>
        <end position="56"/>
    </location>
</feature>
<feature type="topological domain" description="Mitochondrial intermembrane" evidence="2">
    <location>
        <begin position="57"/>
        <end position="539"/>
    </location>
</feature>
<feature type="coiled-coil region" evidence="2">
    <location>
        <begin position="172"/>
        <end position="267"/>
    </location>
</feature>
<sequence>MLRTTASRKIVLRRGLASINTGTTVASKKASHKFRNTFWTIALSATAFYAGGIIYSQKNDKFGDFFSNNVPFAEDLLETYEHYHDRPTLFLEDSWDGLKAKSNDLLSGLTGSSQTRRSNRENIEVKKILSLEPLNIETENSDPQLKEIIGSLNDLINSLNDSNLSIPESEFNSIKKSNQNMLTNLSQLNETLKEALSNYMIQRTSEVITELNTQYENSKREFEKNLQKNLLQEVDEFKENLTKQKDKELEEKLKANEELLQAKHANEVGLLSITQVKEFNKIIKDKIEKERNGRLAHLEEINSEVNDLSKSIDRSSKILSKNEALVQLTFQVDEIKSRINNNNLPDVNIDKELSRLKLLSNLLSTFNKKSCCDDGDCCSCKKGNKNEGKEGKISCKCKPKTNPPSLLSVVYDELESTCSGKKILSNEQIYNRWNLLADDFKTASLLPPNSGILGQLTAKVFSLFLFTKTGNPSNATDFDSVYARVGDNLRVSNLNDAVEEVVSLKGWPHKVCESWIEDARRKLEVQRLVEILDCEIRTL</sequence>
<organism>
    <name type="scientific">Saccharomyces cerevisiae (strain AWRI1631)</name>
    <name type="common">Baker's yeast</name>
    <dbReference type="NCBI Taxonomy" id="545124"/>
    <lineage>
        <taxon>Eukaryota</taxon>
        <taxon>Fungi</taxon>
        <taxon>Dikarya</taxon>
        <taxon>Ascomycota</taxon>
        <taxon>Saccharomycotina</taxon>
        <taxon>Saccharomycetes</taxon>
        <taxon>Saccharomycetales</taxon>
        <taxon>Saccharomycetaceae</taxon>
        <taxon>Saccharomyces</taxon>
    </lineage>
</organism>
<reference key="1">
    <citation type="journal article" date="2008" name="FEMS Yeast Res.">
        <title>Comparative genome analysis of a Saccharomyces cerevisiae wine strain.</title>
        <authorList>
            <person name="Borneman A.R."/>
            <person name="Forgan A.H."/>
            <person name="Pretorius I.S."/>
            <person name="Chambers P.J."/>
        </authorList>
    </citation>
    <scope>NUCLEOTIDE SEQUENCE [LARGE SCALE GENOMIC DNA]</scope>
    <source>
        <strain>AWRI1631</strain>
    </source>
</reference>
<protein>
    <recommendedName>
        <fullName>MICOS complex subunit MIC60</fullName>
    </recommendedName>
    <alternativeName>
        <fullName>Mitofilin</fullName>
    </alternativeName>
</protein>
<evidence type="ECO:0000250" key="1"/>
<evidence type="ECO:0000255" key="2"/>
<evidence type="ECO:0000305" key="3"/>